<comment type="function">
    <text evidence="1">Induces a strong chemotactic response. Induces calcium mobilization. Binds to CXCR6/Bonzo. Also acts as a scavenger receptor on macrophages, which specifically binds to OxLDL (oxidized low density lipoprotein), suggesting that it may be involved in pathophysiology such as atherogenesis (By similarity).</text>
</comment>
<comment type="subcellular location">
    <subcellularLocation>
        <location evidence="4">Membrane</location>
        <topology evidence="4">Single-pass type I membrane protein</topology>
    </subcellularLocation>
</comment>
<comment type="PTM">
    <text evidence="1">Glycosylated.</text>
</comment>
<comment type="similarity">
    <text evidence="4">Belongs to the intercrine alpha (chemokine CxC) family.</text>
</comment>
<dbReference type="EMBL" id="BC114022">
    <property type="protein sequence ID" value="AAI14023.1"/>
    <property type="molecule type" value="mRNA"/>
</dbReference>
<dbReference type="RefSeq" id="NP_001039560.1">
    <property type="nucleotide sequence ID" value="NM_001046095.2"/>
</dbReference>
<dbReference type="FunCoup" id="Q29RT9">
    <property type="interactions" value="173"/>
</dbReference>
<dbReference type="STRING" id="9913.ENSBTAP00000024371"/>
<dbReference type="PaxDb" id="9913-ENSBTAP00000024371"/>
<dbReference type="GeneID" id="511671"/>
<dbReference type="KEGG" id="bta:511671"/>
<dbReference type="CTD" id="58191"/>
<dbReference type="VEuPathDB" id="HostDB:ENSBTAG00000031998"/>
<dbReference type="eggNOG" id="ENOG502T0B7">
    <property type="taxonomic scope" value="Eukaryota"/>
</dbReference>
<dbReference type="HOGENOM" id="CLU_049889_0_0_1"/>
<dbReference type="InParanoid" id="Q29RT9"/>
<dbReference type="OMA" id="RCNSYIR"/>
<dbReference type="OrthoDB" id="9836360at2759"/>
<dbReference type="TreeFam" id="TF337941"/>
<dbReference type="Reactome" id="R-BTA-380108">
    <property type="pathway name" value="Chemokine receptors bind chemokines"/>
</dbReference>
<dbReference type="Reactome" id="R-BTA-418594">
    <property type="pathway name" value="G alpha (i) signalling events"/>
</dbReference>
<dbReference type="Proteomes" id="UP000009136">
    <property type="component" value="Chromosome 19"/>
</dbReference>
<dbReference type="Bgee" id="ENSBTAG00000031998">
    <property type="expression patterns" value="Expressed in lung and 102 other cell types or tissues"/>
</dbReference>
<dbReference type="GO" id="GO:0005615">
    <property type="term" value="C:extracellular space"/>
    <property type="evidence" value="ECO:0000318"/>
    <property type="project" value="GO_Central"/>
</dbReference>
<dbReference type="GO" id="GO:0016020">
    <property type="term" value="C:membrane"/>
    <property type="evidence" value="ECO:0007669"/>
    <property type="project" value="UniProtKB-SubCell"/>
</dbReference>
<dbReference type="GO" id="GO:0008009">
    <property type="term" value="F:chemokine activity"/>
    <property type="evidence" value="ECO:0000318"/>
    <property type="project" value="GO_Central"/>
</dbReference>
<dbReference type="GO" id="GO:0005041">
    <property type="term" value="F:low-density lipoprotein particle receptor activity"/>
    <property type="evidence" value="ECO:0000318"/>
    <property type="project" value="GO_Central"/>
</dbReference>
<dbReference type="GO" id="GO:0005044">
    <property type="term" value="F:scavenger receptor activity"/>
    <property type="evidence" value="ECO:0000318"/>
    <property type="project" value="GO_Central"/>
</dbReference>
<dbReference type="GO" id="GO:0030307">
    <property type="term" value="P:positive regulation of cell growth"/>
    <property type="evidence" value="ECO:0007669"/>
    <property type="project" value="InterPro"/>
</dbReference>
<dbReference type="GO" id="GO:0030335">
    <property type="term" value="P:positive regulation of cell migration"/>
    <property type="evidence" value="ECO:0000318"/>
    <property type="project" value="GO_Central"/>
</dbReference>
<dbReference type="GO" id="GO:0006898">
    <property type="term" value="P:receptor-mediated endocytosis"/>
    <property type="evidence" value="ECO:0007669"/>
    <property type="project" value="InterPro"/>
</dbReference>
<dbReference type="GO" id="GO:0034612">
    <property type="term" value="P:response to tumor necrosis factor"/>
    <property type="evidence" value="ECO:0007669"/>
    <property type="project" value="InterPro"/>
</dbReference>
<dbReference type="GO" id="GO:0034341">
    <property type="term" value="P:response to type II interferon"/>
    <property type="evidence" value="ECO:0007669"/>
    <property type="project" value="InterPro"/>
</dbReference>
<dbReference type="GO" id="GO:0010818">
    <property type="term" value="P:T cell chemotaxis"/>
    <property type="evidence" value="ECO:0000318"/>
    <property type="project" value="GO_Central"/>
</dbReference>
<dbReference type="InterPro" id="IPR026296">
    <property type="entry name" value="CXCL16"/>
</dbReference>
<dbReference type="InterPro" id="IPR048585">
    <property type="entry name" value="CXCL16_dom"/>
</dbReference>
<dbReference type="PANTHER" id="PTHR14385:SF0">
    <property type="entry name" value="C-X-C MOTIF CHEMOKINE 16"/>
    <property type="match status" value="1"/>
</dbReference>
<dbReference type="PANTHER" id="PTHR14385">
    <property type="entry name" value="CXC CHEMOKINE LIGAND"/>
    <property type="match status" value="1"/>
</dbReference>
<dbReference type="Pfam" id="PF20902">
    <property type="entry name" value="CXCL16"/>
    <property type="match status" value="1"/>
</dbReference>
<keyword id="KW-0145">Chemotaxis</keyword>
<keyword id="KW-0202">Cytokine</keyword>
<keyword id="KW-1015">Disulfide bond</keyword>
<keyword id="KW-0325">Glycoprotein</keyword>
<keyword id="KW-0472">Membrane</keyword>
<keyword id="KW-1185">Reference proteome</keyword>
<keyword id="KW-0732">Signal</keyword>
<keyword id="KW-0812">Transmembrane</keyword>
<keyword id="KW-1133">Transmembrane helix</keyword>
<sequence length="252" mass="27586">MMLGRTSRLLLVLLFIAYATTSGNGNEGSKVGSCPCDHTVSSHSPPNENIMRHLRKYLKAYQRCFSYVRFQLPLKNVCGGSTDGWVQELMHCFDSGECGHAQPRVVDAPLHRTQLPEPTEAAPSDTATTSQTYLPSTLQRTQQPTPLEGALSLDSKLIPTHETTTYTSGHSLGAEPEAKENQKQLKENRGPQAGTSATVPVLSLLAIVFILAGVLLYVVCKRRKNQLLQHPPDLAASLYTCSRRTRAENGTL</sequence>
<name>CXL16_BOVIN</name>
<gene>
    <name type="primary">CXCL16</name>
</gene>
<feature type="signal peptide" evidence="2">
    <location>
        <begin position="1"/>
        <end position="25"/>
    </location>
</feature>
<feature type="chain" id="PRO_0000378191" description="C-X-C motif chemokine 16">
    <location>
        <begin position="26"/>
        <end position="252"/>
    </location>
</feature>
<feature type="topological domain" description="Extracellular" evidence="2">
    <location>
        <begin position="26"/>
        <end position="198"/>
    </location>
</feature>
<feature type="transmembrane region" description="Helical" evidence="2">
    <location>
        <begin position="199"/>
        <end position="219"/>
    </location>
</feature>
<feature type="topological domain" description="Cytoplasmic" evidence="2">
    <location>
        <begin position="220"/>
        <end position="252"/>
    </location>
</feature>
<feature type="region of interest" description="Disordered" evidence="3">
    <location>
        <begin position="115"/>
        <end position="145"/>
    </location>
</feature>
<feature type="region of interest" description="Disordered" evidence="3">
    <location>
        <begin position="163"/>
        <end position="195"/>
    </location>
</feature>
<feature type="compositionally biased region" description="Polar residues" evidence="3">
    <location>
        <begin position="125"/>
        <end position="145"/>
    </location>
</feature>
<feature type="compositionally biased region" description="Basic and acidic residues" evidence="3">
    <location>
        <begin position="176"/>
        <end position="189"/>
    </location>
</feature>
<feature type="disulfide bond" evidence="1">
    <location>
        <begin position="34"/>
        <end position="64"/>
    </location>
</feature>
<feature type="disulfide bond" evidence="1">
    <location>
        <begin position="36"/>
        <end position="78"/>
    </location>
</feature>
<organism>
    <name type="scientific">Bos taurus</name>
    <name type="common">Bovine</name>
    <dbReference type="NCBI Taxonomy" id="9913"/>
    <lineage>
        <taxon>Eukaryota</taxon>
        <taxon>Metazoa</taxon>
        <taxon>Chordata</taxon>
        <taxon>Craniata</taxon>
        <taxon>Vertebrata</taxon>
        <taxon>Euteleostomi</taxon>
        <taxon>Mammalia</taxon>
        <taxon>Eutheria</taxon>
        <taxon>Laurasiatheria</taxon>
        <taxon>Artiodactyla</taxon>
        <taxon>Ruminantia</taxon>
        <taxon>Pecora</taxon>
        <taxon>Bovidae</taxon>
        <taxon>Bovinae</taxon>
        <taxon>Bos</taxon>
    </lineage>
</organism>
<reference key="1">
    <citation type="submission" date="2006-02" db="EMBL/GenBank/DDBJ databases">
        <authorList>
            <consortium name="NIH - Mammalian Gene Collection (MGC) project"/>
        </authorList>
    </citation>
    <scope>NUCLEOTIDE SEQUENCE [LARGE SCALE MRNA]</scope>
    <source>
        <strain>Hereford</strain>
        <tissue>Testis</tissue>
    </source>
</reference>
<protein>
    <recommendedName>
        <fullName>C-X-C motif chemokine 16</fullName>
    </recommendedName>
    <alternativeName>
        <fullName>Transmembrane chemokine CXCL16</fullName>
    </alternativeName>
</protein>
<proteinExistence type="evidence at transcript level"/>
<evidence type="ECO:0000250" key="1"/>
<evidence type="ECO:0000255" key="2"/>
<evidence type="ECO:0000256" key="3">
    <source>
        <dbReference type="SAM" id="MobiDB-lite"/>
    </source>
</evidence>
<evidence type="ECO:0000305" key="4"/>
<accession>Q29RT9</accession>